<sequence>MLNYVIKRLLGLIPTLFIVSVLVFLFVHMLPGDPARLIAGPEADAQVIELVRQQLGLDQPLYHQFWHYISNAVQGDFGLSMVSRRPVADEIASRFMPTLWLTITSMVWAVIFGMAAGIIAAVWRNRWPDRLSMTIAVSGISFPAFALGMLLIQVFSVELGWLPTVGADSWQHYILPSLTLGAAVAAVMARFTRASFVDVLSEDYMRTARAKGVSETWVVLKHGLRNAMIPVVTMMGLQFGFLLGGSIVVEKVFNWPGLGRLLVDSVEMRDYPVIQAEILLFSLEFILINLVVDVLYAAINPAIRYK</sequence>
<feature type="chain" id="PRO_0000279992" description="Glutathione transport system permease protein GsiC">
    <location>
        <begin position="1"/>
        <end position="306"/>
    </location>
</feature>
<feature type="topological domain" description="Cytoplasmic" evidence="2">
    <location>
        <begin position="1"/>
        <end position="8"/>
    </location>
</feature>
<feature type="transmembrane region" description="Helical" evidence="3">
    <location>
        <begin position="9"/>
        <end position="29"/>
    </location>
</feature>
<feature type="topological domain" description="Periplasmic" evidence="2">
    <location>
        <begin position="30"/>
        <end position="102"/>
    </location>
</feature>
<feature type="transmembrane region" description="Helical" evidence="3">
    <location>
        <begin position="103"/>
        <end position="123"/>
    </location>
</feature>
<feature type="topological domain" description="Cytoplasmic" evidence="2">
    <location>
        <begin position="124"/>
        <end position="134"/>
    </location>
</feature>
<feature type="transmembrane region" description="Helical" evidence="3">
    <location>
        <begin position="135"/>
        <end position="155"/>
    </location>
</feature>
<feature type="topological domain" description="Periplasmic" evidence="2">
    <location>
        <begin position="156"/>
        <end position="168"/>
    </location>
</feature>
<feature type="transmembrane region" description="Helical" evidence="3">
    <location>
        <begin position="169"/>
        <end position="189"/>
    </location>
</feature>
<feature type="topological domain" description="Cytoplasmic" evidence="2">
    <location>
        <begin position="190"/>
        <end position="228"/>
    </location>
</feature>
<feature type="transmembrane region" description="Helical" evidence="3">
    <location>
        <begin position="229"/>
        <end position="249"/>
    </location>
</feature>
<feature type="topological domain" description="Periplasmic" evidence="2">
    <location>
        <begin position="250"/>
        <end position="277"/>
    </location>
</feature>
<feature type="transmembrane region" description="Helical" evidence="3">
    <location>
        <begin position="278"/>
        <end position="298"/>
    </location>
</feature>
<feature type="topological domain" description="Cytoplasmic" evidence="2">
    <location>
        <begin position="299"/>
        <end position="306"/>
    </location>
</feature>
<feature type="domain" description="ABC transmembrane type-1" evidence="3">
    <location>
        <begin position="95"/>
        <end position="292"/>
    </location>
</feature>
<keyword id="KW-0997">Cell inner membrane</keyword>
<keyword id="KW-1003">Cell membrane</keyword>
<keyword id="KW-0472">Membrane</keyword>
<keyword id="KW-0812">Transmembrane</keyword>
<keyword id="KW-1133">Transmembrane helix</keyword>
<keyword id="KW-0813">Transport</keyword>
<comment type="function">
    <text evidence="1">Part of the ABC transporter complex GsiABCD involved in glutathione import. Probably responsible for the translocation of the substrate across the membrane.</text>
</comment>
<comment type="subunit">
    <text evidence="1">The complex is composed of two ATP-binding proteins (GsiA), two transmembrane proteins (GsiC and GsiD) and a solute-binding protein (GsiB).</text>
</comment>
<comment type="subcellular location">
    <subcellularLocation>
        <location evidence="1">Cell inner membrane</location>
        <topology evidence="2">Multi-pass membrane protein</topology>
    </subcellularLocation>
</comment>
<comment type="similarity">
    <text evidence="4">Belongs to the binding-protein-dependent transport system permease family.</text>
</comment>
<organism>
    <name type="scientific">Escherichia coli O6:K15:H31 (strain 536 / UPEC)</name>
    <dbReference type="NCBI Taxonomy" id="362663"/>
    <lineage>
        <taxon>Bacteria</taxon>
        <taxon>Pseudomonadati</taxon>
        <taxon>Pseudomonadota</taxon>
        <taxon>Gammaproteobacteria</taxon>
        <taxon>Enterobacterales</taxon>
        <taxon>Enterobacteriaceae</taxon>
        <taxon>Escherichia</taxon>
    </lineage>
</organism>
<dbReference type="EMBL" id="CP000247">
    <property type="protein sequence ID" value="ABG68862.1"/>
    <property type="molecule type" value="Genomic_DNA"/>
</dbReference>
<dbReference type="RefSeq" id="WP_000936043.1">
    <property type="nucleotide sequence ID" value="NC_008253.1"/>
</dbReference>
<dbReference type="SMR" id="Q0TJL7"/>
<dbReference type="GeneID" id="86863342"/>
<dbReference type="KEGG" id="ecp:ECP_0845"/>
<dbReference type="HOGENOM" id="CLU_036879_0_0_6"/>
<dbReference type="Proteomes" id="UP000009182">
    <property type="component" value="Chromosome"/>
</dbReference>
<dbReference type="GO" id="GO:0005886">
    <property type="term" value="C:plasma membrane"/>
    <property type="evidence" value="ECO:0007669"/>
    <property type="project" value="UniProtKB-SubCell"/>
</dbReference>
<dbReference type="GO" id="GO:0055085">
    <property type="term" value="P:transmembrane transport"/>
    <property type="evidence" value="ECO:0007669"/>
    <property type="project" value="InterPro"/>
</dbReference>
<dbReference type="CDD" id="cd06261">
    <property type="entry name" value="TM_PBP2"/>
    <property type="match status" value="1"/>
</dbReference>
<dbReference type="FunFam" id="1.10.3720.10:FF:000024">
    <property type="entry name" value="Glutathione ABC transporter permease GsiC"/>
    <property type="match status" value="1"/>
</dbReference>
<dbReference type="Gene3D" id="1.10.3720.10">
    <property type="entry name" value="MetI-like"/>
    <property type="match status" value="1"/>
</dbReference>
<dbReference type="InterPro" id="IPR045621">
    <property type="entry name" value="BPD_transp_1_N"/>
</dbReference>
<dbReference type="InterPro" id="IPR000515">
    <property type="entry name" value="MetI-like"/>
</dbReference>
<dbReference type="InterPro" id="IPR035906">
    <property type="entry name" value="MetI-like_sf"/>
</dbReference>
<dbReference type="NCBIfam" id="NF011661">
    <property type="entry name" value="PRK15081.1"/>
    <property type="match status" value="1"/>
</dbReference>
<dbReference type="PANTHER" id="PTHR43163">
    <property type="entry name" value="DIPEPTIDE TRANSPORT SYSTEM PERMEASE PROTEIN DPPB-RELATED"/>
    <property type="match status" value="1"/>
</dbReference>
<dbReference type="PANTHER" id="PTHR43163:SF5">
    <property type="entry name" value="GLUTATHIONE TRANSPORT SYSTEM PERMEASE PROTEIN GSIC"/>
    <property type="match status" value="1"/>
</dbReference>
<dbReference type="Pfam" id="PF00528">
    <property type="entry name" value="BPD_transp_1"/>
    <property type="match status" value="1"/>
</dbReference>
<dbReference type="Pfam" id="PF19300">
    <property type="entry name" value="BPD_transp_1_N"/>
    <property type="match status" value="1"/>
</dbReference>
<dbReference type="SUPFAM" id="SSF161098">
    <property type="entry name" value="MetI-like"/>
    <property type="match status" value="1"/>
</dbReference>
<dbReference type="PROSITE" id="PS50928">
    <property type="entry name" value="ABC_TM1"/>
    <property type="match status" value="1"/>
</dbReference>
<accession>Q0TJL7</accession>
<name>GSIC_ECOL5</name>
<proteinExistence type="inferred from homology"/>
<evidence type="ECO:0000250" key="1">
    <source>
        <dbReference type="UniProtKB" id="P75798"/>
    </source>
</evidence>
<evidence type="ECO:0000255" key="2"/>
<evidence type="ECO:0000255" key="3">
    <source>
        <dbReference type="PROSITE-ProRule" id="PRU00441"/>
    </source>
</evidence>
<evidence type="ECO:0000305" key="4"/>
<gene>
    <name evidence="1" type="primary">gsiC</name>
    <name type="ordered locus">ECP_0845</name>
</gene>
<reference key="1">
    <citation type="journal article" date="2006" name="Mol. Microbiol.">
        <title>Role of pathogenicity island-associated integrases in the genome plasticity of uropathogenic Escherichia coli strain 536.</title>
        <authorList>
            <person name="Hochhut B."/>
            <person name="Wilde C."/>
            <person name="Balling G."/>
            <person name="Middendorf B."/>
            <person name="Dobrindt U."/>
            <person name="Brzuszkiewicz E."/>
            <person name="Gottschalk G."/>
            <person name="Carniel E."/>
            <person name="Hacker J."/>
        </authorList>
    </citation>
    <scope>NUCLEOTIDE SEQUENCE [LARGE SCALE GENOMIC DNA]</scope>
    <source>
        <strain>536 / UPEC</strain>
    </source>
</reference>
<protein>
    <recommendedName>
        <fullName evidence="1">Glutathione transport system permease protein GsiC</fullName>
    </recommendedName>
</protein>